<evidence type="ECO:0000255" key="1"/>
<evidence type="ECO:0000305" key="2"/>
<accession>P94178</accession>
<feature type="chain" id="PRO_0000206106" description="Cation efflux system protein CzcD">
    <location>
        <begin position="1"/>
        <end position="316"/>
    </location>
</feature>
<feature type="transmembrane region" description="Helical" evidence="1">
    <location>
        <begin position="17"/>
        <end position="37"/>
    </location>
</feature>
<feature type="transmembrane region" description="Helical" evidence="1">
    <location>
        <begin position="47"/>
        <end position="67"/>
    </location>
</feature>
<feature type="transmembrane region" description="Helical" evidence="1">
    <location>
        <begin position="82"/>
        <end position="102"/>
    </location>
</feature>
<feature type="transmembrane region" description="Helical" evidence="1">
    <location>
        <begin position="115"/>
        <end position="135"/>
    </location>
</feature>
<feature type="transmembrane region" description="Helical" evidence="1">
    <location>
        <begin position="152"/>
        <end position="172"/>
    </location>
</feature>
<feature type="transmembrane region" description="Helical" evidence="1">
    <location>
        <begin position="174"/>
        <end position="194"/>
    </location>
</feature>
<keyword id="KW-0104">Cadmium</keyword>
<keyword id="KW-1003">Cell membrane</keyword>
<keyword id="KW-0170">Cobalt</keyword>
<keyword id="KW-0406">Ion transport</keyword>
<keyword id="KW-0472">Membrane</keyword>
<keyword id="KW-0812">Transmembrane</keyword>
<keyword id="KW-1133">Transmembrane helix</keyword>
<keyword id="KW-0813">Transport</keyword>
<keyword id="KW-0862">Zinc</keyword>
<keyword id="KW-0864">Zinc transport</keyword>
<protein>
    <recommendedName>
        <fullName>Cation efflux system protein CzcD</fullName>
    </recommendedName>
</protein>
<comment type="function">
    <text>Necessary for activation of the czc determinant.</text>
</comment>
<comment type="subcellular location">
    <subcellularLocation>
        <location evidence="2">Cell membrane</location>
        <topology evidence="2">Multi-pass membrane protein</topology>
    </subcellularLocation>
</comment>
<comment type="similarity">
    <text evidence="2">Belongs to the cation diffusion facilitator (CDF) transporter (TC 2.A.4) family. SLC30A subfamily.</text>
</comment>
<gene>
    <name type="primary">czcD</name>
</gene>
<sequence>MGAGHSHDHPGGNERSLKIALALTGTFLIAEVVGGVMTKSLALISDAAHMLTDTVALAIALAAIAIAKRPADKKRTFGYYRFEILAAAFNALLLFGVAIYILYEAYLRLKSPPQIESTGMFVVAVLGLIINLISMRMLSSGQSSSLNVKGAYLEVWSDLLGSVGVIAGAIIIRFTGWAWVDSAIAVLIGLWVLPRTWFLLKSSLNVLLEGVPDDVDLAEVEKQILATPGVKSFHDLHIWALTSGKASLTVHVVNDTAVNPEMEVLPELKQMLADKFDITHVTIQFELAPCEQADAAQHFNASPALVGSKSLAAGGN</sequence>
<organism>
    <name type="scientific">Alcaligenes sp. (strain CT14)</name>
    <dbReference type="NCBI Taxonomy" id="68998"/>
    <lineage>
        <taxon>Bacteria</taxon>
        <taxon>Pseudomonadati</taxon>
        <taxon>Pseudomonadota</taxon>
        <taxon>Betaproteobacteria</taxon>
        <taxon>Burkholderiales</taxon>
        <taxon>Alcaligenaceae</taxon>
        <taxon>Alcaligenes</taxon>
    </lineage>
</organism>
<proteinExistence type="inferred from homology"/>
<name>CZCD_ALCSC</name>
<reference key="1">
    <citation type="journal article" date="1996" name="Biosci. Biotechnol. Biochem.">
        <title>Cloning and sequence analysis of czc genes in Alcaligenes sp. strain CT14.</title>
        <authorList>
            <person name="Kunito T."/>
            <person name="Kusano T."/>
            <person name="Oyaizu H."/>
            <person name="Senoo K."/>
            <person name="Kanazawa S."/>
            <person name="Matsumoto S."/>
        </authorList>
    </citation>
    <scope>NUCLEOTIDE SEQUENCE [GENOMIC DNA]</scope>
</reference>
<dbReference type="EMBL" id="D67044">
    <property type="protein sequence ID" value="BAA11062.1"/>
    <property type="molecule type" value="Genomic_DNA"/>
</dbReference>
<dbReference type="PIR" id="JC4701">
    <property type="entry name" value="JC4701"/>
</dbReference>
<dbReference type="SMR" id="P94178"/>
<dbReference type="GO" id="GO:0005886">
    <property type="term" value="C:plasma membrane"/>
    <property type="evidence" value="ECO:0007669"/>
    <property type="project" value="UniProtKB-SubCell"/>
</dbReference>
<dbReference type="GO" id="GO:0005385">
    <property type="term" value="F:zinc ion transmembrane transporter activity"/>
    <property type="evidence" value="ECO:0007669"/>
    <property type="project" value="TreeGrafter"/>
</dbReference>
<dbReference type="Gene3D" id="1.20.1510.10">
    <property type="entry name" value="Cation efflux protein transmembrane domain"/>
    <property type="match status" value="1"/>
</dbReference>
<dbReference type="InterPro" id="IPR002524">
    <property type="entry name" value="Cation_efflux"/>
</dbReference>
<dbReference type="InterPro" id="IPR036837">
    <property type="entry name" value="Cation_efflux_CTD_sf"/>
</dbReference>
<dbReference type="InterPro" id="IPR027469">
    <property type="entry name" value="Cation_efflux_TMD_sf"/>
</dbReference>
<dbReference type="InterPro" id="IPR050681">
    <property type="entry name" value="CDF/SLC30A"/>
</dbReference>
<dbReference type="NCBIfam" id="TIGR01297">
    <property type="entry name" value="CDF"/>
    <property type="match status" value="1"/>
</dbReference>
<dbReference type="PANTHER" id="PTHR11562">
    <property type="entry name" value="CATION EFFLUX PROTEIN/ ZINC TRANSPORTER"/>
    <property type="match status" value="1"/>
</dbReference>
<dbReference type="PANTHER" id="PTHR11562:SF17">
    <property type="entry name" value="RE54080P-RELATED"/>
    <property type="match status" value="1"/>
</dbReference>
<dbReference type="Pfam" id="PF01545">
    <property type="entry name" value="Cation_efflux"/>
    <property type="match status" value="1"/>
</dbReference>
<dbReference type="SUPFAM" id="SSF160240">
    <property type="entry name" value="Cation efflux protein cytoplasmic domain-like"/>
    <property type="match status" value="1"/>
</dbReference>
<dbReference type="SUPFAM" id="SSF161111">
    <property type="entry name" value="Cation efflux protein transmembrane domain-like"/>
    <property type="match status" value="1"/>
</dbReference>